<reference key="1">
    <citation type="journal article" date="2005" name="Science">
        <title>The transcriptional landscape of the mammalian genome.</title>
        <authorList>
            <person name="Carninci P."/>
            <person name="Kasukawa T."/>
            <person name="Katayama S."/>
            <person name="Gough J."/>
            <person name="Frith M.C."/>
            <person name="Maeda N."/>
            <person name="Oyama R."/>
            <person name="Ravasi T."/>
            <person name="Lenhard B."/>
            <person name="Wells C."/>
            <person name="Kodzius R."/>
            <person name="Shimokawa K."/>
            <person name="Bajic V.B."/>
            <person name="Brenner S.E."/>
            <person name="Batalov S."/>
            <person name="Forrest A.R."/>
            <person name="Zavolan M."/>
            <person name="Davis M.J."/>
            <person name="Wilming L.G."/>
            <person name="Aidinis V."/>
            <person name="Allen J.E."/>
            <person name="Ambesi-Impiombato A."/>
            <person name="Apweiler R."/>
            <person name="Aturaliya R.N."/>
            <person name="Bailey T.L."/>
            <person name="Bansal M."/>
            <person name="Baxter L."/>
            <person name="Beisel K.W."/>
            <person name="Bersano T."/>
            <person name="Bono H."/>
            <person name="Chalk A.M."/>
            <person name="Chiu K.P."/>
            <person name="Choudhary V."/>
            <person name="Christoffels A."/>
            <person name="Clutterbuck D.R."/>
            <person name="Crowe M.L."/>
            <person name="Dalla E."/>
            <person name="Dalrymple B.P."/>
            <person name="de Bono B."/>
            <person name="Della Gatta G."/>
            <person name="di Bernardo D."/>
            <person name="Down T."/>
            <person name="Engstrom P."/>
            <person name="Fagiolini M."/>
            <person name="Faulkner G."/>
            <person name="Fletcher C.F."/>
            <person name="Fukushima T."/>
            <person name="Furuno M."/>
            <person name="Futaki S."/>
            <person name="Gariboldi M."/>
            <person name="Georgii-Hemming P."/>
            <person name="Gingeras T.R."/>
            <person name="Gojobori T."/>
            <person name="Green R.E."/>
            <person name="Gustincich S."/>
            <person name="Harbers M."/>
            <person name="Hayashi Y."/>
            <person name="Hensch T.K."/>
            <person name="Hirokawa N."/>
            <person name="Hill D."/>
            <person name="Huminiecki L."/>
            <person name="Iacono M."/>
            <person name="Ikeo K."/>
            <person name="Iwama A."/>
            <person name="Ishikawa T."/>
            <person name="Jakt M."/>
            <person name="Kanapin A."/>
            <person name="Katoh M."/>
            <person name="Kawasawa Y."/>
            <person name="Kelso J."/>
            <person name="Kitamura H."/>
            <person name="Kitano H."/>
            <person name="Kollias G."/>
            <person name="Krishnan S.P."/>
            <person name="Kruger A."/>
            <person name="Kummerfeld S.K."/>
            <person name="Kurochkin I.V."/>
            <person name="Lareau L.F."/>
            <person name="Lazarevic D."/>
            <person name="Lipovich L."/>
            <person name="Liu J."/>
            <person name="Liuni S."/>
            <person name="McWilliam S."/>
            <person name="Madan Babu M."/>
            <person name="Madera M."/>
            <person name="Marchionni L."/>
            <person name="Matsuda H."/>
            <person name="Matsuzawa S."/>
            <person name="Miki H."/>
            <person name="Mignone F."/>
            <person name="Miyake S."/>
            <person name="Morris K."/>
            <person name="Mottagui-Tabar S."/>
            <person name="Mulder N."/>
            <person name="Nakano N."/>
            <person name="Nakauchi H."/>
            <person name="Ng P."/>
            <person name="Nilsson R."/>
            <person name="Nishiguchi S."/>
            <person name="Nishikawa S."/>
            <person name="Nori F."/>
            <person name="Ohara O."/>
            <person name="Okazaki Y."/>
            <person name="Orlando V."/>
            <person name="Pang K.C."/>
            <person name="Pavan W.J."/>
            <person name="Pavesi G."/>
            <person name="Pesole G."/>
            <person name="Petrovsky N."/>
            <person name="Piazza S."/>
            <person name="Reed J."/>
            <person name="Reid J.F."/>
            <person name="Ring B.Z."/>
            <person name="Ringwald M."/>
            <person name="Rost B."/>
            <person name="Ruan Y."/>
            <person name="Salzberg S.L."/>
            <person name="Sandelin A."/>
            <person name="Schneider C."/>
            <person name="Schoenbach C."/>
            <person name="Sekiguchi K."/>
            <person name="Semple C.A."/>
            <person name="Seno S."/>
            <person name="Sessa L."/>
            <person name="Sheng Y."/>
            <person name="Shibata Y."/>
            <person name="Shimada H."/>
            <person name="Shimada K."/>
            <person name="Silva D."/>
            <person name="Sinclair B."/>
            <person name="Sperling S."/>
            <person name="Stupka E."/>
            <person name="Sugiura K."/>
            <person name="Sultana R."/>
            <person name="Takenaka Y."/>
            <person name="Taki K."/>
            <person name="Tammoja K."/>
            <person name="Tan S.L."/>
            <person name="Tang S."/>
            <person name="Taylor M.S."/>
            <person name="Tegner J."/>
            <person name="Teichmann S.A."/>
            <person name="Ueda H.R."/>
            <person name="van Nimwegen E."/>
            <person name="Verardo R."/>
            <person name="Wei C.L."/>
            <person name="Yagi K."/>
            <person name="Yamanishi H."/>
            <person name="Zabarovsky E."/>
            <person name="Zhu S."/>
            <person name="Zimmer A."/>
            <person name="Hide W."/>
            <person name="Bult C."/>
            <person name="Grimmond S.M."/>
            <person name="Teasdale R.D."/>
            <person name="Liu E.T."/>
            <person name="Brusic V."/>
            <person name="Quackenbush J."/>
            <person name="Wahlestedt C."/>
            <person name="Mattick J.S."/>
            <person name="Hume D.A."/>
            <person name="Kai C."/>
            <person name="Sasaki D."/>
            <person name="Tomaru Y."/>
            <person name="Fukuda S."/>
            <person name="Kanamori-Katayama M."/>
            <person name="Suzuki M."/>
            <person name="Aoki J."/>
            <person name="Arakawa T."/>
            <person name="Iida J."/>
            <person name="Imamura K."/>
            <person name="Itoh M."/>
            <person name="Kato T."/>
            <person name="Kawaji H."/>
            <person name="Kawagashira N."/>
            <person name="Kawashima T."/>
            <person name="Kojima M."/>
            <person name="Kondo S."/>
            <person name="Konno H."/>
            <person name="Nakano K."/>
            <person name="Ninomiya N."/>
            <person name="Nishio T."/>
            <person name="Okada M."/>
            <person name="Plessy C."/>
            <person name="Shibata K."/>
            <person name="Shiraki T."/>
            <person name="Suzuki S."/>
            <person name="Tagami M."/>
            <person name="Waki K."/>
            <person name="Watahiki A."/>
            <person name="Okamura-Oho Y."/>
            <person name="Suzuki H."/>
            <person name="Kawai J."/>
            <person name="Hayashizaki Y."/>
        </authorList>
    </citation>
    <scope>NUCLEOTIDE SEQUENCE [LARGE SCALE MRNA]</scope>
    <source>
        <strain>C57BL/6J</strain>
        <strain>NOD</strain>
        <tissue>Cerebellum</tissue>
        <tissue>Dendritic cell</tissue>
    </source>
</reference>
<reference key="2">
    <citation type="journal article" date="2009" name="PLoS Biol.">
        <title>Lineage-specific biology revealed by a finished genome assembly of the mouse.</title>
        <authorList>
            <person name="Church D.M."/>
            <person name="Goodstadt L."/>
            <person name="Hillier L.W."/>
            <person name="Zody M.C."/>
            <person name="Goldstein S."/>
            <person name="She X."/>
            <person name="Bult C.J."/>
            <person name="Agarwala R."/>
            <person name="Cherry J.L."/>
            <person name="DiCuccio M."/>
            <person name="Hlavina W."/>
            <person name="Kapustin Y."/>
            <person name="Meric P."/>
            <person name="Maglott D."/>
            <person name="Birtle Z."/>
            <person name="Marques A.C."/>
            <person name="Graves T."/>
            <person name="Zhou S."/>
            <person name="Teague B."/>
            <person name="Potamousis K."/>
            <person name="Churas C."/>
            <person name="Place M."/>
            <person name="Herschleb J."/>
            <person name="Runnheim R."/>
            <person name="Forrest D."/>
            <person name="Amos-Landgraf J."/>
            <person name="Schwartz D.C."/>
            <person name="Cheng Z."/>
            <person name="Lindblad-Toh K."/>
            <person name="Eichler E.E."/>
            <person name="Ponting C.P."/>
        </authorList>
    </citation>
    <scope>NUCLEOTIDE SEQUENCE [LARGE SCALE GENOMIC DNA]</scope>
    <source>
        <strain>C57BL/6J</strain>
    </source>
</reference>
<reference key="3">
    <citation type="journal article" date="2010" name="Cell">
        <title>A tissue-specific atlas of mouse protein phosphorylation and expression.</title>
        <authorList>
            <person name="Huttlin E.L."/>
            <person name="Jedrychowski M.P."/>
            <person name="Elias J.E."/>
            <person name="Goswami T."/>
            <person name="Rad R."/>
            <person name="Beausoleil S.A."/>
            <person name="Villen J."/>
            <person name="Haas W."/>
            <person name="Sowa M.E."/>
            <person name="Gygi S.P."/>
        </authorList>
    </citation>
    <scope>PHOSPHORYLATION [LARGE SCALE ANALYSIS] AT SER-26</scope>
    <scope>IDENTIFICATION BY MASS SPECTROMETRY [LARGE SCALE ANALYSIS]</scope>
    <source>
        <tissue>Kidney</tissue>
    </source>
</reference>
<reference key="4">
    <citation type="journal article" date="2011" name="Proc. Natl. Acad. Sci. U.S.A.">
        <title>RefilinB (FAM101B) targets filamin A to organize perinuclear actin networks and regulates nuclear shape.</title>
        <authorList>
            <person name="Gay O."/>
            <person name="Gilquin B."/>
            <person name="Nakamura F."/>
            <person name="Jenkins Z.A."/>
            <person name="McCartney R."/>
            <person name="Krakow D."/>
            <person name="Deshiere A."/>
            <person name="Assard N."/>
            <person name="Hartwig J.H."/>
            <person name="Robertson S.P."/>
            <person name="Baudier J."/>
        </authorList>
    </citation>
    <scope>INTERACTION WITH FLNA AND FLNB</scope>
    <scope>FUNCTION</scope>
    <scope>SUBCELLULAR LOCATION</scope>
</reference>
<reference key="5">
    <citation type="journal article" date="2014" name="Hum. Mol. Genet.">
        <title>Filamin-interacting proteins, Cfm1 and Cfm2, are essential for the formation of cartilaginous skeletal elements.</title>
        <authorList>
            <person name="Mizuhashi K."/>
            <person name="Kanamoto T."/>
            <person name="Moriishi T."/>
            <person name="Muranishi Y."/>
            <person name="Miyazaki T."/>
            <person name="Terada K."/>
            <person name="Omori Y."/>
            <person name="Ito M."/>
            <person name="Komori T."/>
            <person name="Furukawa T."/>
        </authorList>
    </citation>
    <scope>TISSUE SPECIFICITY</scope>
    <scope>SUBCELLULAR LOCATION</scope>
    <scope>DEVELOPMENTAL STAGE</scope>
    <scope>DISRUPTION PHENOTYPE</scope>
    <scope>FUNCTION</scope>
    <scope>INTERACTION WITH FLNA AND FLNB</scope>
</reference>
<feature type="chain" id="PRO_0000264632" description="Refilin-B">
    <location>
        <begin position="1"/>
        <end position="216"/>
    </location>
</feature>
<feature type="region of interest" description="Disordered" evidence="2">
    <location>
        <begin position="1"/>
        <end position="55"/>
    </location>
</feature>
<feature type="modified residue" description="Phosphoserine" evidence="1">
    <location>
        <position position="6"/>
    </location>
</feature>
<feature type="modified residue" description="Phosphoserine" evidence="8">
    <location>
        <position position="26"/>
    </location>
</feature>
<feature type="sequence conflict" description="In Ref. 1; BAB23855." evidence="6" ref="1">
    <original>P</original>
    <variation>A</variation>
    <location>
        <position position="11"/>
    </location>
</feature>
<protein>
    <recommendedName>
        <fullName>Refilin-B</fullName>
    </recommendedName>
    <alternativeName>
        <fullName>Regulator of filamin protein B</fullName>
        <shortName>RefilinB</shortName>
    </alternativeName>
</protein>
<proteinExistence type="evidence at protein level"/>
<organism>
    <name type="scientific">Mus musculus</name>
    <name type="common">Mouse</name>
    <dbReference type="NCBI Taxonomy" id="10090"/>
    <lineage>
        <taxon>Eukaryota</taxon>
        <taxon>Metazoa</taxon>
        <taxon>Chordata</taxon>
        <taxon>Craniata</taxon>
        <taxon>Vertebrata</taxon>
        <taxon>Euteleostomi</taxon>
        <taxon>Mammalia</taxon>
        <taxon>Eutheria</taxon>
        <taxon>Euarchontoglires</taxon>
        <taxon>Glires</taxon>
        <taxon>Rodentia</taxon>
        <taxon>Myomorpha</taxon>
        <taxon>Muroidea</taxon>
        <taxon>Muridae</taxon>
        <taxon>Murinae</taxon>
        <taxon>Mus</taxon>
        <taxon>Mus</taxon>
    </lineage>
</organism>
<name>RFLB_MOUSE</name>
<dbReference type="EMBL" id="AK005164">
    <property type="protein sequence ID" value="BAB23855.1"/>
    <property type="molecule type" value="mRNA"/>
</dbReference>
<dbReference type="EMBL" id="AK171075">
    <property type="protein sequence ID" value="BAE42230.1"/>
    <property type="molecule type" value="mRNA"/>
</dbReference>
<dbReference type="EMBL" id="AL645569">
    <property type="status" value="NOT_ANNOTATED_CDS"/>
    <property type="molecule type" value="Genomic_DNA"/>
</dbReference>
<dbReference type="CCDS" id="CCDS48851.1"/>
<dbReference type="RefSeq" id="NP_083934.1">
    <property type="nucleotide sequence ID" value="NM_029658.1"/>
</dbReference>
<dbReference type="FunCoup" id="Q5SVD0">
    <property type="interactions" value="76"/>
</dbReference>
<dbReference type="iPTMnet" id="Q5SVD0"/>
<dbReference type="PhosphoSitePlus" id="Q5SVD0"/>
<dbReference type="PaxDb" id="10090-ENSMUSP00000021207"/>
<dbReference type="ProteomicsDB" id="253256"/>
<dbReference type="Pumba" id="Q5SVD0"/>
<dbReference type="Antibodypedia" id="65394">
    <property type="antibodies" value="24 antibodies from 12 providers"/>
</dbReference>
<dbReference type="Ensembl" id="ENSMUST00000021207.7">
    <property type="protein sequence ID" value="ENSMUSP00000021207.7"/>
    <property type="gene ID" value="ENSMUSG00000020846.7"/>
</dbReference>
<dbReference type="GeneID" id="76566"/>
<dbReference type="KEGG" id="mmu:76566"/>
<dbReference type="UCSC" id="uc007kez.2">
    <property type="organism name" value="mouse"/>
</dbReference>
<dbReference type="AGR" id="MGI:1923816"/>
<dbReference type="CTD" id="359845"/>
<dbReference type="MGI" id="MGI:1923816">
    <property type="gene designation" value="Rflnb"/>
</dbReference>
<dbReference type="VEuPathDB" id="HostDB:ENSMUSG00000020846"/>
<dbReference type="eggNOG" id="ENOG502RXSW">
    <property type="taxonomic scope" value="Eukaryota"/>
</dbReference>
<dbReference type="GeneTree" id="ENSGT00390000016836"/>
<dbReference type="HOGENOM" id="CLU_107206_0_0_1"/>
<dbReference type="InParanoid" id="Q5SVD0"/>
<dbReference type="OMA" id="PDMRKRG"/>
<dbReference type="OrthoDB" id="9932345at2759"/>
<dbReference type="PhylomeDB" id="Q5SVD0"/>
<dbReference type="TreeFam" id="TF332387"/>
<dbReference type="BioGRID-ORCS" id="76566">
    <property type="hits" value="2 hits in 76 CRISPR screens"/>
</dbReference>
<dbReference type="ChiTaRS" id="Fam101b">
    <property type="organism name" value="mouse"/>
</dbReference>
<dbReference type="PRO" id="PR:Q5SVD0"/>
<dbReference type="Proteomes" id="UP000000589">
    <property type="component" value="Chromosome 11"/>
</dbReference>
<dbReference type="RNAct" id="Q5SVD0">
    <property type="molecule type" value="protein"/>
</dbReference>
<dbReference type="Bgee" id="ENSMUSG00000020846">
    <property type="expression patterns" value="Expressed in epithelium of stomach and 250 other cell types or tissues"/>
</dbReference>
<dbReference type="GO" id="GO:0015629">
    <property type="term" value="C:actin cytoskeleton"/>
    <property type="evidence" value="ECO:0000314"/>
    <property type="project" value="MGI"/>
</dbReference>
<dbReference type="GO" id="GO:0032432">
    <property type="term" value="C:actin filament bundle"/>
    <property type="evidence" value="ECO:0000314"/>
    <property type="project" value="MGI"/>
</dbReference>
<dbReference type="GO" id="GO:0005737">
    <property type="term" value="C:cytoplasm"/>
    <property type="evidence" value="ECO:0007669"/>
    <property type="project" value="UniProtKB-KW"/>
</dbReference>
<dbReference type="GO" id="GO:0031005">
    <property type="term" value="F:filamin binding"/>
    <property type="evidence" value="ECO:0000266"/>
    <property type="project" value="MGI"/>
</dbReference>
<dbReference type="GO" id="GO:0030036">
    <property type="term" value="P:actin cytoskeleton organization"/>
    <property type="evidence" value="ECO:0000315"/>
    <property type="project" value="MGI"/>
</dbReference>
<dbReference type="GO" id="GO:0061572">
    <property type="term" value="P:actin filament bundle organization"/>
    <property type="evidence" value="ECO:0000316"/>
    <property type="project" value="MGI"/>
</dbReference>
<dbReference type="GO" id="GO:0001837">
    <property type="term" value="P:epithelial to mesenchymal transition"/>
    <property type="evidence" value="ECO:0000316"/>
    <property type="project" value="MGI"/>
</dbReference>
<dbReference type="GO" id="GO:1900158">
    <property type="term" value="P:negative regulation of bone mineralization involved in bone maturation"/>
    <property type="evidence" value="ECO:0000316"/>
    <property type="project" value="MGI"/>
</dbReference>
<dbReference type="GO" id="GO:0061182">
    <property type="term" value="P:negative regulation of chondrocyte development"/>
    <property type="evidence" value="ECO:0000316"/>
    <property type="project" value="MGI"/>
</dbReference>
<dbReference type="GO" id="GO:0048705">
    <property type="term" value="P:skeletal system morphogenesis"/>
    <property type="evidence" value="ECO:0000316"/>
    <property type="project" value="MGI"/>
</dbReference>
<dbReference type="InterPro" id="IPR028215">
    <property type="entry name" value="Refilin"/>
</dbReference>
<dbReference type="PANTHER" id="PTHR31848">
    <property type="match status" value="1"/>
</dbReference>
<dbReference type="PANTHER" id="PTHR31848:SF2">
    <property type="entry name" value="REFILIN-B"/>
    <property type="match status" value="1"/>
</dbReference>
<dbReference type="Pfam" id="PF15068">
    <property type="entry name" value="FAM101"/>
    <property type="match status" value="1"/>
</dbReference>
<evidence type="ECO:0000250" key="1">
    <source>
        <dbReference type="UniProtKB" id="Q8N5W9"/>
    </source>
</evidence>
<evidence type="ECO:0000256" key="2">
    <source>
        <dbReference type="SAM" id="MobiDB-lite"/>
    </source>
</evidence>
<evidence type="ECO:0000269" key="3">
    <source>
    </source>
</evidence>
<evidence type="ECO:0000269" key="4">
    <source>
    </source>
</evidence>
<evidence type="ECO:0000303" key="5">
    <source>
    </source>
</evidence>
<evidence type="ECO:0000305" key="6"/>
<evidence type="ECO:0000312" key="7">
    <source>
        <dbReference type="MGI" id="MGI:1923816"/>
    </source>
</evidence>
<evidence type="ECO:0007744" key="8">
    <source>
    </source>
</evidence>
<gene>
    <name evidence="7" type="primary">Rflnb</name>
    <name evidence="5" type="synonym">Cfm1</name>
    <name type="synonym">Fam101b</name>
</gene>
<keyword id="KW-0963">Cytoplasm</keyword>
<keyword id="KW-0206">Cytoskeleton</keyword>
<keyword id="KW-0597">Phosphoprotein</keyword>
<keyword id="KW-1185">Reference proteome</keyword>
<sequence length="216" mass="23380">MVGRLSLQDVPELVDTKKKGDGVLDSPDSGLPPSPSPSHWGLAATAGGGGERAPVAGTLEPDAAVTPIVPNPASLTHSLAAICSPRLCPLSFGEGVEFDPLPPKEIKYTSSVKYDSERHFIDDVQMPLGLVVASCSQTVTCIPNCTWRNYKAEVRFEPRPKPARFLSTTIVYPKYPKTVYTTTLDYNCHKKLRRFLSSVELEATEFLGSDGLADEC</sequence>
<accession>Q5SVD0</accession>
<accession>Q9DB69</accession>
<comment type="function">
    <text evidence="3 4">Involved in the regulation of the perinuclear actin network and nuclear shape through interaction with filamins. Plays an essential role in the formation of cartilaginous skeletal elements.</text>
</comment>
<comment type="subunit">
    <text evidence="3 4">Interacts with FLNA and FLNB.</text>
</comment>
<comment type="subcellular location">
    <subcellularLocation>
        <location evidence="3 4">Cytoplasm</location>
        <location evidence="3 4">Cytoskeleton</location>
    </subcellularLocation>
    <text evidence="4">Colocalizes with FLNA along actin bundle-like structures.</text>
</comment>
<comment type="tissue specificity">
    <text evidence="4">Detected in various tissues, with highest expression in lung, followed by spleen.</text>
</comment>
<comment type="developmental stage">
    <text evidence="4">At 15.5 dpc, expressed in developing ribs and nucleus pulposus in intervertebral disks. At 18.5 dpc, expression is detected in proliferating and prehypertrophic chondrocytes.</text>
</comment>
<comment type="disruption phenotype">
    <text evidence="4">No visible phenotype; probably due to redundancy with RFLN. RFLNA and RFLNB double mutant mice exhibit severe skeletal malformations, as characterized by scoliosis, kyphosis, intervertebral disks defects, vertebral fusion in the spine and longitudinal bone growth retardation. Chondrocyte maturation is accelerated in double mutant mice.</text>
</comment>
<comment type="similarity">
    <text evidence="6">Belongs to the Refilin family.</text>
</comment>